<proteinExistence type="inferred from homology"/>
<organism>
    <name type="scientific">Mycoplasmopsis pulmonis (strain UAB CTIP)</name>
    <name type="common">Mycoplasma pulmonis</name>
    <dbReference type="NCBI Taxonomy" id="272635"/>
    <lineage>
        <taxon>Bacteria</taxon>
        <taxon>Bacillati</taxon>
        <taxon>Mycoplasmatota</taxon>
        <taxon>Mycoplasmoidales</taxon>
        <taxon>Metamycoplasmataceae</taxon>
        <taxon>Mycoplasmopsis</taxon>
    </lineage>
</organism>
<accession>Q98PU8</accession>
<comment type="function">
    <text evidence="1">Endonuclease IV plays a role in DNA repair. It cleaves phosphodiester bonds at apurinic or apyrimidinic (AP) sites, generating a 3'-hydroxyl group and a 5'-terminal sugar phosphate.</text>
</comment>
<comment type="catalytic activity">
    <reaction evidence="1">
        <text>Endonucleolytic cleavage to 5'-phosphooligonucleotide end-products.</text>
        <dbReference type="EC" id="3.1.21.2"/>
    </reaction>
</comment>
<comment type="cofactor">
    <cofactor evidence="1">
        <name>Zn(2+)</name>
        <dbReference type="ChEBI" id="CHEBI:29105"/>
    </cofactor>
    <text evidence="1">Binds 3 Zn(2+) ions.</text>
</comment>
<comment type="similarity">
    <text evidence="1">Belongs to the AP endonuclease 2 family.</text>
</comment>
<sequence length="277" mass="31685">MIKLGSHVSFKSPNYLYDSIKESIKNGANCAMIFLGAPQNTKRVDFEKYQYEKYLKDFSNLIKPEDIVVHAPYIINPASLEKADFAISFLSSEIKRMDKAKFKYLVLHPGFYGKNNVKDSLDQLARSIQKIFEITKDSNVEIMLETMSGKGSEVGKSYEEILYVIDKVKSPRLGACLDTCHVWDAGYNINDYQVFKDELIKTGILKHIKVIHLNDSKNELGSHKDRHANIDKGLIGLKNLKRIVHDPIFENIPIILETPWTEKGPIYDQEIAMLLEK</sequence>
<gene>
    <name evidence="1" type="primary">nfo</name>
    <name type="ordered locus">MYPU_6210</name>
</gene>
<evidence type="ECO:0000255" key="1">
    <source>
        <dbReference type="HAMAP-Rule" id="MF_00152"/>
    </source>
</evidence>
<feature type="chain" id="PRO_0000190859" description="Probable endonuclease 4">
    <location>
        <begin position="1"/>
        <end position="277"/>
    </location>
</feature>
<feature type="binding site" evidence="1">
    <location>
        <position position="70"/>
    </location>
    <ligand>
        <name>Zn(2+)</name>
        <dbReference type="ChEBI" id="CHEBI:29105"/>
        <label>1</label>
    </ligand>
</feature>
<feature type="binding site" evidence="1">
    <location>
        <position position="108"/>
    </location>
    <ligand>
        <name>Zn(2+)</name>
        <dbReference type="ChEBI" id="CHEBI:29105"/>
        <label>1</label>
    </ligand>
</feature>
<feature type="binding site" evidence="1">
    <location>
        <position position="145"/>
    </location>
    <ligand>
        <name>Zn(2+)</name>
        <dbReference type="ChEBI" id="CHEBI:29105"/>
        <label>1</label>
    </ligand>
</feature>
<feature type="binding site" evidence="1">
    <location>
        <position position="145"/>
    </location>
    <ligand>
        <name>Zn(2+)</name>
        <dbReference type="ChEBI" id="CHEBI:29105"/>
        <label>2</label>
    </ligand>
</feature>
<feature type="binding site" evidence="1">
    <location>
        <position position="178"/>
    </location>
    <ligand>
        <name>Zn(2+)</name>
        <dbReference type="ChEBI" id="CHEBI:29105"/>
        <label>2</label>
    </ligand>
</feature>
<feature type="binding site" evidence="1">
    <location>
        <position position="181"/>
    </location>
    <ligand>
        <name>Zn(2+)</name>
        <dbReference type="ChEBI" id="CHEBI:29105"/>
        <label>3</label>
    </ligand>
</feature>
<feature type="binding site" evidence="1">
    <location>
        <position position="212"/>
    </location>
    <ligand>
        <name>Zn(2+)</name>
        <dbReference type="ChEBI" id="CHEBI:29105"/>
        <label>2</label>
    </ligand>
</feature>
<feature type="binding site" evidence="1">
    <location>
        <position position="225"/>
    </location>
    <ligand>
        <name>Zn(2+)</name>
        <dbReference type="ChEBI" id="CHEBI:29105"/>
        <label>3</label>
    </ligand>
</feature>
<feature type="binding site" evidence="1">
    <location>
        <position position="227"/>
    </location>
    <ligand>
        <name>Zn(2+)</name>
        <dbReference type="ChEBI" id="CHEBI:29105"/>
        <label>3</label>
    </ligand>
</feature>
<feature type="binding site" evidence="1">
    <location>
        <position position="257"/>
    </location>
    <ligand>
        <name>Zn(2+)</name>
        <dbReference type="ChEBI" id="CHEBI:29105"/>
        <label>2</label>
    </ligand>
</feature>
<dbReference type="EC" id="3.1.21.2" evidence="1"/>
<dbReference type="EMBL" id="AL445565">
    <property type="protein sequence ID" value="CAC13794.1"/>
    <property type="molecule type" value="Genomic_DNA"/>
</dbReference>
<dbReference type="PIR" id="E90589">
    <property type="entry name" value="E90589"/>
</dbReference>
<dbReference type="RefSeq" id="WP_010925422.1">
    <property type="nucleotide sequence ID" value="NC_002771.1"/>
</dbReference>
<dbReference type="SMR" id="Q98PU8"/>
<dbReference type="STRING" id="272635.gene:17577228"/>
<dbReference type="KEGG" id="mpu:MYPU_6210"/>
<dbReference type="eggNOG" id="COG0648">
    <property type="taxonomic scope" value="Bacteria"/>
</dbReference>
<dbReference type="HOGENOM" id="CLU_025885_0_4_14"/>
<dbReference type="BioCyc" id="MPUL272635:G1GT6-631-MONOMER"/>
<dbReference type="Proteomes" id="UP000000528">
    <property type="component" value="Chromosome"/>
</dbReference>
<dbReference type="GO" id="GO:0008833">
    <property type="term" value="F:deoxyribonuclease IV (phage-T4-induced) activity"/>
    <property type="evidence" value="ECO:0007669"/>
    <property type="project" value="UniProtKB-UniRule"/>
</dbReference>
<dbReference type="GO" id="GO:0003677">
    <property type="term" value="F:DNA binding"/>
    <property type="evidence" value="ECO:0007669"/>
    <property type="project" value="InterPro"/>
</dbReference>
<dbReference type="GO" id="GO:0003906">
    <property type="term" value="F:DNA-(apurinic or apyrimidinic site) endonuclease activity"/>
    <property type="evidence" value="ECO:0007669"/>
    <property type="project" value="TreeGrafter"/>
</dbReference>
<dbReference type="GO" id="GO:0008081">
    <property type="term" value="F:phosphoric diester hydrolase activity"/>
    <property type="evidence" value="ECO:0007669"/>
    <property type="project" value="TreeGrafter"/>
</dbReference>
<dbReference type="GO" id="GO:0008270">
    <property type="term" value="F:zinc ion binding"/>
    <property type="evidence" value="ECO:0007669"/>
    <property type="project" value="UniProtKB-UniRule"/>
</dbReference>
<dbReference type="GO" id="GO:0006284">
    <property type="term" value="P:base-excision repair"/>
    <property type="evidence" value="ECO:0007669"/>
    <property type="project" value="TreeGrafter"/>
</dbReference>
<dbReference type="CDD" id="cd00019">
    <property type="entry name" value="AP2Ec"/>
    <property type="match status" value="1"/>
</dbReference>
<dbReference type="FunFam" id="3.20.20.150:FF:000001">
    <property type="entry name" value="Probable endonuclease 4"/>
    <property type="match status" value="1"/>
</dbReference>
<dbReference type="Gene3D" id="3.20.20.150">
    <property type="entry name" value="Divalent-metal-dependent TIM barrel enzymes"/>
    <property type="match status" value="1"/>
</dbReference>
<dbReference type="HAMAP" id="MF_00152">
    <property type="entry name" value="Nfo"/>
    <property type="match status" value="1"/>
</dbReference>
<dbReference type="InterPro" id="IPR001719">
    <property type="entry name" value="AP_endonuc_2"/>
</dbReference>
<dbReference type="InterPro" id="IPR018246">
    <property type="entry name" value="AP_endonuc_F2_Zn_BS"/>
</dbReference>
<dbReference type="InterPro" id="IPR036237">
    <property type="entry name" value="Xyl_isomerase-like_sf"/>
</dbReference>
<dbReference type="InterPro" id="IPR013022">
    <property type="entry name" value="Xyl_isomerase-like_TIM-brl"/>
</dbReference>
<dbReference type="NCBIfam" id="TIGR00587">
    <property type="entry name" value="nfo"/>
    <property type="match status" value="1"/>
</dbReference>
<dbReference type="NCBIfam" id="NF002196">
    <property type="entry name" value="PRK01060.1-1"/>
    <property type="match status" value="1"/>
</dbReference>
<dbReference type="PANTHER" id="PTHR21445:SF0">
    <property type="entry name" value="APURINIC-APYRIMIDINIC ENDONUCLEASE"/>
    <property type="match status" value="1"/>
</dbReference>
<dbReference type="PANTHER" id="PTHR21445">
    <property type="entry name" value="ENDONUCLEASE IV ENDODEOXYRIBONUCLEASE IV"/>
    <property type="match status" value="1"/>
</dbReference>
<dbReference type="Pfam" id="PF01261">
    <property type="entry name" value="AP_endonuc_2"/>
    <property type="match status" value="1"/>
</dbReference>
<dbReference type="SMART" id="SM00518">
    <property type="entry name" value="AP2Ec"/>
    <property type="match status" value="1"/>
</dbReference>
<dbReference type="SUPFAM" id="SSF51658">
    <property type="entry name" value="Xylose isomerase-like"/>
    <property type="match status" value="1"/>
</dbReference>
<dbReference type="PROSITE" id="PS00729">
    <property type="entry name" value="AP_NUCLEASE_F2_1"/>
    <property type="match status" value="1"/>
</dbReference>
<dbReference type="PROSITE" id="PS00731">
    <property type="entry name" value="AP_NUCLEASE_F2_3"/>
    <property type="match status" value="1"/>
</dbReference>
<dbReference type="PROSITE" id="PS51432">
    <property type="entry name" value="AP_NUCLEASE_F2_4"/>
    <property type="match status" value="1"/>
</dbReference>
<name>END4_MYCPU</name>
<reference key="1">
    <citation type="journal article" date="2001" name="Nucleic Acids Res.">
        <title>The complete genome sequence of the murine respiratory pathogen Mycoplasma pulmonis.</title>
        <authorList>
            <person name="Chambaud I."/>
            <person name="Heilig R."/>
            <person name="Ferris S."/>
            <person name="Barbe V."/>
            <person name="Samson D."/>
            <person name="Galisson F."/>
            <person name="Moszer I."/>
            <person name="Dybvig K."/>
            <person name="Wroblewski H."/>
            <person name="Viari A."/>
            <person name="Rocha E.P.C."/>
            <person name="Blanchard A."/>
        </authorList>
    </citation>
    <scope>NUCLEOTIDE SEQUENCE [LARGE SCALE GENOMIC DNA]</scope>
    <source>
        <strain>UAB CTIP</strain>
    </source>
</reference>
<protein>
    <recommendedName>
        <fullName evidence="1">Probable endonuclease 4</fullName>
        <ecNumber evidence="1">3.1.21.2</ecNumber>
    </recommendedName>
    <alternativeName>
        <fullName evidence="1">Endodeoxyribonuclease IV</fullName>
    </alternativeName>
    <alternativeName>
        <fullName evidence="1">Endonuclease IV</fullName>
    </alternativeName>
</protein>
<keyword id="KW-0227">DNA damage</keyword>
<keyword id="KW-0234">DNA repair</keyword>
<keyword id="KW-0255">Endonuclease</keyword>
<keyword id="KW-0378">Hydrolase</keyword>
<keyword id="KW-0479">Metal-binding</keyword>
<keyword id="KW-0540">Nuclease</keyword>
<keyword id="KW-1185">Reference proteome</keyword>
<keyword id="KW-0862">Zinc</keyword>